<name>PYRG_CORK4</name>
<keyword id="KW-0067">ATP-binding</keyword>
<keyword id="KW-0315">Glutamine amidotransferase</keyword>
<keyword id="KW-0436">Ligase</keyword>
<keyword id="KW-0460">Magnesium</keyword>
<keyword id="KW-0479">Metal-binding</keyword>
<keyword id="KW-0547">Nucleotide-binding</keyword>
<keyword id="KW-0665">Pyrimidine biosynthesis</keyword>
<keyword id="KW-1185">Reference proteome</keyword>
<gene>
    <name evidence="1" type="primary">pyrG</name>
    <name type="ordered locus">ckrop_0855</name>
</gene>
<proteinExistence type="inferred from homology"/>
<sequence>MSQPRAEHVTKFVFVTGGVASSLGKGLTASSLGQLLTARGLKVTMQKLDPYLNVDPGTMNPFQHGEVFVTDDGAETDLDLGHYERFLNRNLSGNANVTTGQVYSEVIAKERRGEYLGDTVQVIPHITDEIKHRILTMDRPDENGVRPDIVITEIGGTVGDIESQPFLEAARQTRHDVGRENIFFIHVSLVPYLAPSGELKTKPTQHSVAALRSIGIVPDALVLRCDREVPEPLKAKIALMCDVDQEGVISCADADSIYEIPKVLHREHLDAFLIRRLDLPFRDVDWEEWDSLLRKVHEPEHELTVALVGKYIDLPDAYLSVTEAIRAGGFANNARARVKWVPSDLCQTEEGAEKELGNVDAIVVPGGFGIRGIEGKIGAVRYARTHRVPFLGLCLGLQCMVIEAARAAGITDASSTEFDPQTTEPVVSTMAEQMAAVSGEADLGGTMRLGAYPAVLDKGSVVAEAYQTLEVSERHRHRYEINNAYRQRITDGVGLKFSGTSPDGKLVEFIEYPDHPYMVATQAHPEYKSRPTKAHPLFTALVKAGLKHKNDEEK</sequence>
<feature type="chain" id="PRO_1000214008" description="CTP synthase">
    <location>
        <begin position="1"/>
        <end position="554"/>
    </location>
</feature>
<feature type="domain" description="Glutamine amidotransferase type-1" evidence="1">
    <location>
        <begin position="304"/>
        <end position="551"/>
    </location>
</feature>
<feature type="region of interest" description="Amidoligase domain" evidence="1">
    <location>
        <begin position="1"/>
        <end position="279"/>
    </location>
</feature>
<feature type="active site" description="Nucleophile; for glutamine hydrolysis" evidence="1">
    <location>
        <position position="394"/>
    </location>
</feature>
<feature type="active site" evidence="1">
    <location>
        <position position="524"/>
    </location>
</feature>
<feature type="active site" evidence="1">
    <location>
        <position position="526"/>
    </location>
</feature>
<feature type="binding site" evidence="1">
    <location>
        <position position="21"/>
    </location>
    <ligand>
        <name>CTP</name>
        <dbReference type="ChEBI" id="CHEBI:37563"/>
        <note>allosteric inhibitor</note>
    </ligand>
</feature>
<feature type="binding site" evidence="1">
    <location>
        <position position="21"/>
    </location>
    <ligand>
        <name>UTP</name>
        <dbReference type="ChEBI" id="CHEBI:46398"/>
    </ligand>
</feature>
<feature type="binding site" evidence="1">
    <location>
        <begin position="22"/>
        <end position="27"/>
    </location>
    <ligand>
        <name>ATP</name>
        <dbReference type="ChEBI" id="CHEBI:30616"/>
    </ligand>
</feature>
<feature type="binding site" evidence="1">
    <location>
        <position position="79"/>
    </location>
    <ligand>
        <name>ATP</name>
        <dbReference type="ChEBI" id="CHEBI:30616"/>
    </ligand>
</feature>
<feature type="binding site" evidence="1">
    <location>
        <position position="79"/>
    </location>
    <ligand>
        <name>Mg(2+)</name>
        <dbReference type="ChEBI" id="CHEBI:18420"/>
    </ligand>
</feature>
<feature type="binding site" evidence="1">
    <location>
        <position position="153"/>
    </location>
    <ligand>
        <name>Mg(2+)</name>
        <dbReference type="ChEBI" id="CHEBI:18420"/>
    </ligand>
</feature>
<feature type="binding site" evidence="1">
    <location>
        <begin position="160"/>
        <end position="162"/>
    </location>
    <ligand>
        <name>CTP</name>
        <dbReference type="ChEBI" id="CHEBI:37563"/>
        <note>allosteric inhibitor</note>
    </ligand>
</feature>
<feature type="binding site" evidence="1">
    <location>
        <begin position="200"/>
        <end position="205"/>
    </location>
    <ligand>
        <name>CTP</name>
        <dbReference type="ChEBI" id="CHEBI:37563"/>
        <note>allosteric inhibitor</note>
    </ligand>
</feature>
<feature type="binding site" evidence="1">
    <location>
        <begin position="200"/>
        <end position="205"/>
    </location>
    <ligand>
        <name>UTP</name>
        <dbReference type="ChEBI" id="CHEBI:46398"/>
    </ligand>
</feature>
<feature type="binding site" evidence="1">
    <location>
        <position position="236"/>
    </location>
    <ligand>
        <name>CTP</name>
        <dbReference type="ChEBI" id="CHEBI:37563"/>
        <note>allosteric inhibitor</note>
    </ligand>
</feature>
<feature type="binding site" evidence="1">
    <location>
        <position position="236"/>
    </location>
    <ligand>
        <name>UTP</name>
        <dbReference type="ChEBI" id="CHEBI:46398"/>
    </ligand>
</feature>
<feature type="binding site" evidence="1">
    <location>
        <position position="367"/>
    </location>
    <ligand>
        <name>L-glutamine</name>
        <dbReference type="ChEBI" id="CHEBI:58359"/>
    </ligand>
</feature>
<feature type="binding site" evidence="1">
    <location>
        <begin position="395"/>
        <end position="398"/>
    </location>
    <ligand>
        <name>L-glutamine</name>
        <dbReference type="ChEBI" id="CHEBI:58359"/>
    </ligand>
</feature>
<feature type="binding site" evidence="1">
    <location>
        <position position="417"/>
    </location>
    <ligand>
        <name>L-glutamine</name>
        <dbReference type="ChEBI" id="CHEBI:58359"/>
    </ligand>
</feature>
<feature type="binding site" evidence="1">
    <location>
        <position position="478"/>
    </location>
    <ligand>
        <name>L-glutamine</name>
        <dbReference type="ChEBI" id="CHEBI:58359"/>
    </ligand>
</feature>
<accession>C4LIF4</accession>
<protein>
    <recommendedName>
        <fullName evidence="1">CTP synthase</fullName>
        <ecNumber evidence="1">6.3.4.2</ecNumber>
    </recommendedName>
    <alternativeName>
        <fullName evidence="1">Cytidine 5'-triphosphate synthase</fullName>
    </alternativeName>
    <alternativeName>
        <fullName evidence="1">Cytidine triphosphate synthetase</fullName>
        <shortName evidence="1">CTP synthetase</shortName>
        <shortName evidence="1">CTPS</shortName>
    </alternativeName>
    <alternativeName>
        <fullName evidence="1">UTP--ammonia ligase</fullName>
    </alternativeName>
</protein>
<organism>
    <name type="scientific">Corynebacterium kroppenstedtii (strain DSM 44385 / JCM 11950 / CIP 105744 / CCUG 35717)</name>
    <dbReference type="NCBI Taxonomy" id="645127"/>
    <lineage>
        <taxon>Bacteria</taxon>
        <taxon>Bacillati</taxon>
        <taxon>Actinomycetota</taxon>
        <taxon>Actinomycetes</taxon>
        <taxon>Mycobacteriales</taxon>
        <taxon>Corynebacteriaceae</taxon>
        <taxon>Corynebacterium</taxon>
    </lineage>
</organism>
<reference key="1">
    <citation type="journal article" date="2008" name="J. Biotechnol.">
        <title>Ultrafast pyrosequencing of Corynebacterium kroppenstedtii DSM44385 revealed insights into the physiology of a lipophilic corynebacterium that lacks mycolic acids.</title>
        <authorList>
            <person name="Tauch A."/>
            <person name="Schneider J."/>
            <person name="Szczepanowski R."/>
            <person name="Tilker A."/>
            <person name="Viehoever P."/>
            <person name="Gartemann K.-H."/>
            <person name="Arnold W."/>
            <person name="Blom J."/>
            <person name="Brinkrolf K."/>
            <person name="Brune I."/>
            <person name="Goetker S."/>
            <person name="Weisshaar B."/>
            <person name="Goesmann A."/>
            <person name="Droege M."/>
            <person name="Puehler A."/>
        </authorList>
    </citation>
    <scope>NUCLEOTIDE SEQUENCE [LARGE SCALE GENOMIC DNA]</scope>
    <source>
        <strain>DSM 44385 / JCM 11950 / CIP 105744 / CCUG 35717</strain>
    </source>
</reference>
<evidence type="ECO:0000255" key="1">
    <source>
        <dbReference type="HAMAP-Rule" id="MF_01227"/>
    </source>
</evidence>
<dbReference type="EC" id="6.3.4.2" evidence="1"/>
<dbReference type="EMBL" id="CP001620">
    <property type="protein sequence ID" value="ACR17609.1"/>
    <property type="molecule type" value="Genomic_DNA"/>
</dbReference>
<dbReference type="RefSeq" id="WP_012731496.1">
    <property type="nucleotide sequence ID" value="NC_012704.1"/>
</dbReference>
<dbReference type="SMR" id="C4LIF4"/>
<dbReference type="STRING" id="645127.ckrop_0855"/>
<dbReference type="KEGG" id="ckp:ckrop_0855"/>
<dbReference type="eggNOG" id="COG0504">
    <property type="taxonomic scope" value="Bacteria"/>
</dbReference>
<dbReference type="HOGENOM" id="CLU_011675_5_0_11"/>
<dbReference type="OrthoDB" id="9801107at2"/>
<dbReference type="UniPathway" id="UPA00159">
    <property type="reaction ID" value="UER00277"/>
</dbReference>
<dbReference type="Proteomes" id="UP000001473">
    <property type="component" value="Chromosome"/>
</dbReference>
<dbReference type="GO" id="GO:0005829">
    <property type="term" value="C:cytosol"/>
    <property type="evidence" value="ECO:0007669"/>
    <property type="project" value="TreeGrafter"/>
</dbReference>
<dbReference type="GO" id="GO:0005524">
    <property type="term" value="F:ATP binding"/>
    <property type="evidence" value="ECO:0007669"/>
    <property type="project" value="UniProtKB-KW"/>
</dbReference>
<dbReference type="GO" id="GO:0003883">
    <property type="term" value="F:CTP synthase activity"/>
    <property type="evidence" value="ECO:0007669"/>
    <property type="project" value="UniProtKB-UniRule"/>
</dbReference>
<dbReference type="GO" id="GO:0004359">
    <property type="term" value="F:glutaminase activity"/>
    <property type="evidence" value="ECO:0007669"/>
    <property type="project" value="RHEA"/>
</dbReference>
<dbReference type="GO" id="GO:0042802">
    <property type="term" value="F:identical protein binding"/>
    <property type="evidence" value="ECO:0007669"/>
    <property type="project" value="TreeGrafter"/>
</dbReference>
<dbReference type="GO" id="GO:0046872">
    <property type="term" value="F:metal ion binding"/>
    <property type="evidence" value="ECO:0007669"/>
    <property type="project" value="UniProtKB-KW"/>
</dbReference>
<dbReference type="GO" id="GO:0044210">
    <property type="term" value="P:'de novo' CTP biosynthetic process"/>
    <property type="evidence" value="ECO:0007669"/>
    <property type="project" value="UniProtKB-UniRule"/>
</dbReference>
<dbReference type="GO" id="GO:0019856">
    <property type="term" value="P:pyrimidine nucleobase biosynthetic process"/>
    <property type="evidence" value="ECO:0007669"/>
    <property type="project" value="TreeGrafter"/>
</dbReference>
<dbReference type="CDD" id="cd03113">
    <property type="entry name" value="CTPS_N"/>
    <property type="match status" value="1"/>
</dbReference>
<dbReference type="CDD" id="cd01746">
    <property type="entry name" value="GATase1_CTP_Synthase"/>
    <property type="match status" value="1"/>
</dbReference>
<dbReference type="FunFam" id="3.40.50.300:FF:000009">
    <property type="entry name" value="CTP synthase"/>
    <property type="match status" value="1"/>
</dbReference>
<dbReference type="FunFam" id="3.40.50.880:FF:000002">
    <property type="entry name" value="CTP synthase"/>
    <property type="match status" value="1"/>
</dbReference>
<dbReference type="Gene3D" id="3.40.50.880">
    <property type="match status" value="1"/>
</dbReference>
<dbReference type="Gene3D" id="3.40.50.300">
    <property type="entry name" value="P-loop containing nucleotide triphosphate hydrolases"/>
    <property type="match status" value="1"/>
</dbReference>
<dbReference type="HAMAP" id="MF_01227">
    <property type="entry name" value="PyrG"/>
    <property type="match status" value="1"/>
</dbReference>
<dbReference type="InterPro" id="IPR029062">
    <property type="entry name" value="Class_I_gatase-like"/>
</dbReference>
<dbReference type="InterPro" id="IPR004468">
    <property type="entry name" value="CTP_synthase"/>
</dbReference>
<dbReference type="InterPro" id="IPR017456">
    <property type="entry name" value="CTP_synthase_N"/>
</dbReference>
<dbReference type="InterPro" id="IPR017926">
    <property type="entry name" value="GATASE"/>
</dbReference>
<dbReference type="InterPro" id="IPR033828">
    <property type="entry name" value="GATase1_CTP_Synthase"/>
</dbReference>
<dbReference type="InterPro" id="IPR027417">
    <property type="entry name" value="P-loop_NTPase"/>
</dbReference>
<dbReference type="NCBIfam" id="NF003792">
    <property type="entry name" value="PRK05380.1"/>
    <property type="match status" value="1"/>
</dbReference>
<dbReference type="NCBIfam" id="TIGR00337">
    <property type="entry name" value="PyrG"/>
    <property type="match status" value="1"/>
</dbReference>
<dbReference type="PANTHER" id="PTHR11550">
    <property type="entry name" value="CTP SYNTHASE"/>
    <property type="match status" value="1"/>
</dbReference>
<dbReference type="PANTHER" id="PTHR11550:SF0">
    <property type="entry name" value="CTP SYNTHASE-RELATED"/>
    <property type="match status" value="1"/>
</dbReference>
<dbReference type="Pfam" id="PF06418">
    <property type="entry name" value="CTP_synth_N"/>
    <property type="match status" value="1"/>
</dbReference>
<dbReference type="Pfam" id="PF00117">
    <property type="entry name" value="GATase"/>
    <property type="match status" value="1"/>
</dbReference>
<dbReference type="SUPFAM" id="SSF52317">
    <property type="entry name" value="Class I glutamine amidotransferase-like"/>
    <property type="match status" value="1"/>
</dbReference>
<dbReference type="SUPFAM" id="SSF52540">
    <property type="entry name" value="P-loop containing nucleoside triphosphate hydrolases"/>
    <property type="match status" value="1"/>
</dbReference>
<dbReference type="PROSITE" id="PS51273">
    <property type="entry name" value="GATASE_TYPE_1"/>
    <property type="match status" value="1"/>
</dbReference>
<comment type="function">
    <text evidence="1">Catalyzes the ATP-dependent amination of UTP to CTP with either L-glutamine or ammonia as the source of nitrogen. Regulates intracellular CTP levels through interactions with the four ribonucleotide triphosphates.</text>
</comment>
<comment type="catalytic activity">
    <reaction evidence="1">
        <text>UTP + L-glutamine + ATP + H2O = CTP + L-glutamate + ADP + phosphate + 2 H(+)</text>
        <dbReference type="Rhea" id="RHEA:26426"/>
        <dbReference type="ChEBI" id="CHEBI:15377"/>
        <dbReference type="ChEBI" id="CHEBI:15378"/>
        <dbReference type="ChEBI" id="CHEBI:29985"/>
        <dbReference type="ChEBI" id="CHEBI:30616"/>
        <dbReference type="ChEBI" id="CHEBI:37563"/>
        <dbReference type="ChEBI" id="CHEBI:43474"/>
        <dbReference type="ChEBI" id="CHEBI:46398"/>
        <dbReference type="ChEBI" id="CHEBI:58359"/>
        <dbReference type="ChEBI" id="CHEBI:456216"/>
        <dbReference type="EC" id="6.3.4.2"/>
    </reaction>
</comment>
<comment type="catalytic activity">
    <reaction evidence="1">
        <text>L-glutamine + H2O = L-glutamate + NH4(+)</text>
        <dbReference type="Rhea" id="RHEA:15889"/>
        <dbReference type="ChEBI" id="CHEBI:15377"/>
        <dbReference type="ChEBI" id="CHEBI:28938"/>
        <dbReference type="ChEBI" id="CHEBI:29985"/>
        <dbReference type="ChEBI" id="CHEBI:58359"/>
    </reaction>
</comment>
<comment type="catalytic activity">
    <reaction evidence="1">
        <text>UTP + NH4(+) + ATP = CTP + ADP + phosphate + 2 H(+)</text>
        <dbReference type="Rhea" id="RHEA:16597"/>
        <dbReference type="ChEBI" id="CHEBI:15378"/>
        <dbReference type="ChEBI" id="CHEBI:28938"/>
        <dbReference type="ChEBI" id="CHEBI:30616"/>
        <dbReference type="ChEBI" id="CHEBI:37563"/>
        <dbReference type="ChEBI" id="CHEBI:43474"/>
        <dbReference type="ChEBI" id="CHEBI:46398"/>
        <dbReference type="ChEBI" id="CHEBI:456216"/>
    </reaction>
</comment>
<comment type="activity regulation">
    <text evidence="1">Allosterically activated by GTP, when glutamine is the substrate; GTP has no effect on the reaction when ammonia is the substrate. The allosteric effector GTP functions by stabilizing the protein conformation that binds the tetrahedral intermediate(s) formed during glutamine hydrolysis. Inhibited by the product CTP, via allosteric rather than competitive inhibition.</text>
</comment>
<comment type="pathway">
    <text evidence="1">Pyrimidine metabolism; CTP biosynthesis via de novo pathway; CTP from UDP: step 2/2.</text>
</comment>
<comment type="subunit">
    <text evidence="1">Homotetramer.</text>
</comment>
<comment type="miscellaneous">
    <text evidence="1">CTPSs have evolved a hybrid strategy for distinguishing between UTP and CTP. The overlapping regions of the product feedback inhibitory and substrate sites recognize a common feature in both compounds, the triphosphate moiety. To differentiate isosteric substrate and product pyrimidine rings, an additional pocket far from the expected kinase/ligase catalytic site, specifically recognizes the cytosine and ribose portions of the product inhibitor.</text>
</comment>
<comment type="similarity">
    <text evidence="1">Belongs to the CTP synthase family.</text>
</comment>